<protein>
    <recommendedName>
        <fullName evidence="1">Small ribosomal subunit protein uS14B</fullName>
    </recommendedName>
    <alternativeName>
        <fullName evidence="2">30S ribosomal protein S14 type Z</fullName>
    </alternativeName>
</protein>
<organism>
    <name type="scientific">Staphylococcus aureus (strain N315)</name>
    <dbReference type="NCBI Taxonomy" id="158879"/>
    <lineage>
        <taxon>Bacteria</taxon>
        <taxon>Bacillati</taxon>
        <taxon>Bacillota</taxon>
        <taxon>Bacilli</taxon>
        <taxon>Bacillales</taxon>
        <taxon>Staphylococcaceae</taxon>
        <taxon>Staphylococcus</taxon>
    </lineage>
</organism>
<proteinExistence type="inferred from homology"/>
<accession>P66412</accession>
<accession>Q99S34</accession>
<sequence length="61" mass="7300">MAKTSMVAKQQKKQKYAVREYTRCERCGRPHSVYRKFKLCRICFRELAYKGQIPGVRKASW</sequence>
<feature type="chain" id="PRO_0000130928" description="Small ribosomal subunit protein uS14B">
    <location>
        <begin position="1"/>
        <end position="61"/>
    </location>
</feature>
<feature type="binding site" evidence="1">
    <location>
        <position position="24"/>
    </location>
    <ligand>
        <name>Zn(2+)</name>
        <dbReference type="ChEBI" id="CHEBI:29105"/>
    </ligand>
</feature>
<feature type="binding site" evidence="1">
    <location>
        <position position="27"/>
    </location>
    <ligand>
        <name>Zn(2+)</name>
        <dbReference type="ChEBI" id="CHEBI:29105"/>
    </ligand>
</feature>
<feature type="binding site" evidence="1">
    <location>
        <position position="40"/>
    </location>
    <ligand>
        <name>Zn(2+)</name>
        <dbReference type="ChEBI" id="CHEBI:29105"/>
    </ligand>
</feature>
<feature type="binding site" evidence="1">
    <location>
        <position position="43"/>
    </location>
    <ligand>
        <name>Zn(2+)</name>
        <dbReference type="ChEBI" id="CHEBI:29105"/>
    </ligand>
</feature>
<keyword id="KW-0479">Metal-binding</keyword>
<keyword id="KW-0687">Ribonucleoprotein</keyword>
<keyword id="KW-0689">Ribosomal protein</keyword>
<keyword id="KW-0694">RNA-binding</keyword>
<keyword id="KW-0699">rRNA-binding</keyword>
<keyword id="KW-0862">Zinc</keyword>
<dbReference type="EMBL" id="BA000018">
    <property type="protein sequence ID" value="BAB43329.1"/>
    <property type="molecule type" value="Genomic_DNA"/>
</dbReference>
<dbReference type="PIR" id="H90020">
    <property type="entry name" value="H90020"/>
</dbReference>
<dbReference type="RefSeq" id="WP_001140799.1">
    <property type="nucleotide sequence ID" value="NC_002745.2"/>
</dbReference>
<dbReference type="SMR" id="P66412"/>
<dbReference type="EnsemblBacteria" id="BAB43329">
    <property type="protein sequence ID" value="BAB43329"/>
    <property type="gene ID" value="BAB43329"/>
</dbReference>
<dbReference type="KEGG" id="sau:SAS079"/>
<dbReference type="HOGENOM" id="CLU_139869_3_0_9"/>
<dbReference type="GO" id="GO:0015935">
    <property type="term" value="C:small ribosomal subunit"/>
    <property type="evidence" value="ECO:0007669"/>
    <property type="project" value="TreeGrafter"/>
</dbReference>
<dbReference type="GO" id="GO:0019843">
    <property type="term" value="F:rRNA binding"/>
    <property type="evidence" value="ECO:0007669"/>
    <property type="project" value="UniProtKB-UniRule"/>
</dbReference>
<dbReference type="GO" id="GO:0003735">
    <property type="term" value="F:structural constituent of ribosome"/>
    <property type="evidence" value="ECO:0007669"/>
    <property type="project" value="InterPro"/>
</dbReference>
<dbReference type="GO" id="GO:0008270">
    <property type="term" value="F:zinc ion binding"/>
    <property type="evidence" value="ECO:0007669"/>
    <property type="project" value="UniProtKB-UniRule"/>
</dbReference>
<dbReference type="GO" id="GO:0006412">
    <property type="term" value="P:translation"/>
    <property type="evidence" value="ECO:0007669"/>
    <property type="project" value="UniProtKB-UniRule"/>
</dbReference>
<dbReference type="FunFam" id="4.10.830.10:FF:000001">
    <property type="entry name" value="30S ribosomal protein S14 type Z"/>
    <property type="match status" value="1"/>
</dbReference>
<dbReference type="Gene3D" id="4.10.830.10">
    <property type="entry name" value="30s Ribosomal Protein S14, Chain N"/>
    <property type="match status" value="1"/>
</dbReference>
<dbReference type="HAMAP" id="MF_01364_B">
    <property type="entry name" value="Ribosomal_uS14_2_B"/>
    <property type="match status" value="1"/>
</dbReference>
<dbReference type="InterPro" id="IPR001209">
    <property type="entry name" value="Ribosomal_uS14"/>
</dbReference>
<dbReference type="InterPro" id="IPR023053">
    <property type="entry name" value="Ribosomal_uS14_bact"/>
</dbReference>
<dbReference type="InterPro" id="IPR018271">
    <property type="entry name" value="Ribosomal_uS14_CS"/>
</dbReference>
<dbReference type="InterPro" id="IPR043140">
    <property type="entry name" value="Ribosomal_uS14_sf"/>
</dbReference>
<dbReference type="NCBIfam" id="NF005974">
    <property type="entry name" value="PRK08061.1"/>
    <property type="match status" value="1"/>
</dbReference>
<dbReference type="PANTHER" id="PTHR19836">
    <property type="entry name" value="30S RIBOSOMAL PROTEIN S14"/>
    <property type="match status" value="1"/>
</dbReference>
<dbReference type="PANTHER" id="PTHR19836:SF26">
    <property type="entry name" value="SMALL RIBOSOMAL SUBUNIT PROTEIN US14B"/>
    <property type="match status" value="1"/>
</dbReference>
<dbReference type="Pfam" id="PF00253">
    <property type="entry name" value="Ribosomal_S14"/>
    <property type="match status" value="1"/>
</dbReference>
<dbReference type="SUPFAM" id="SSF57716">
    <property type="entry name" value="Glucocorticoid receptor-like (DNA-binding domain)"/>
    <property type="match status" value="1"/>
</dbReference>
<dbReference type="PROSITE" id="PS00527">
    <property type="entry name" value="RIBOSOMAL_S14"/>
    <property type="match status" value="1"/>
</dbReference>
<reference key="1">
    <citation type="journal article" date="2001" name="Lancet">
        <title>Whole genome sequencing of meticillin-resistant Staphylococcus aureus.</title>
        <authorList>
            <person name="Kuroda M."/>
            <person name="Ohta T."/>
            <person name="Uchiyama I."/>
            <person name="Baba T."/>
            <person name="Yuzawa H."/>
            <person name="Kobayashi I."/>
            <person name="Cui L."/>
            <person name="Oguchi A."/>
            <person name="Aoki K."/>
            <person name="Nagai Y."/>
            <person name="Lian J.-Q."/>
            <person name="Ito T."/>
            <person name="Kanamori M."/>
            <person name="Matsumaru H."/>
            <person name="Maruyama A."/>
            <person name="Murakami H."/>
            <person name="Hosoyama A."/>
            <person name="Mizutani-Ui Y."/>
            <person name="Takahashi N.K."/>
            <person name="Sawano T."/>
            <person name="Inoue R."/>
            <person name="Kaito C."/>
            <person name="Sekimizu K."/>
            <person name="Hirakawa H."/>
            <person name="Kuhara S."/>
            <person name="Goto S."/>
            <person name="Yabuzaki J."/>
            <person name="Kanehisa M."/>
            <person name="Yamashita A."/>
            <person name="Oshima K."/>
            <person name="Furuya K."/>
            <person name="Yoshino C."/>
            <person name="Shiba T."/>
            <person name="Hattori M."/>
            <person name="Ogasawara N."/>
            <person name="Hayashi H."/>
            <person name="Hiramatsu K."/>
        </authorList>
    </citation>
    <scope>NUCLEOTIDE SEQUENCE [LARGE SCALE GENOMIC DNA]</scope>
    <source>
        <strain>N315</strain>
    </source>
</reference>
<evidence type="ECO:0000255" key="1">
    <source>
        <dbReference type="HAMAP-Rule" id="MF_01364"/>
    </source>
</evidence>
<evidence type="ECO:0000305" key="2"/>
<gene>
    <name evidence="1" type="primary">rpsZ</name>
    <name evidence="1" type="synonym">rpsN1</name>
    <name type="ordered locus">SA2034.1</name>
    <name type="ORF">SAS079</name>
</gene>
<comment type="function">
    <text evidence="1">Binds 16S rRNA, required for the assembly of 30S particles and may also be responsible for determining the conformation of the 16S rRNA at the A site.</text>
</comment>
<comment type="cofactor">
    <cofactor evidence="1">
        <name>Zn(2+)</name>
        <dbReference type="ChEBI" id="CHEBI:29105"/>
    </cofactor>
    <text evidence="1">Binds 1 zinc ion per subunit.</text>
</comment>
<comment type="subunit">
    <text evidence="1">Part of the 30S ribosomal subunit. Contacts proteins S3 and S10.</text>
</comment>
<comment type="similarity">
    <text evidence="1">Belongs to the universal ribosomal protein uS14 family. Zinc-binding uS14 subfamily.</text>
</comment>
<name>RS14Z_STAAN</name>